<sequence>MSEQEVLQKNNSPEGKEDRIIGKHVFGNLYDIDAERLNDKEFLEKLVLEAVNIAHMKLVEIKAWSFGGKKGGVSVIALVEESHIALHTWNEYNYATLDVYTCGEDSDPQSAFAHIVNALNPKRYQMFYADRSSQ</sequence>
<proteinExistence type="inferred from homology"/>
<dbReference type="EC" id="4.1.1.19" evidence="1"/>
<dbReference type="EMBL" id="CP001399">
    <property type="protein sequence ID" value="ACP35700.1"/>
    <property type="molecule type" value="Genomic_DNA"/>
</dbReference>
<dbReference type="SMR" id="C3MQN7"/>
<dbReference type="KEGG" id="sis:LS215_1696"/>
<dbReference type="HOGENOM" id="CLU_125470_2_1_2"/>
<dbReference type="OrthoDB" id="114016at2157"/>
<dbReference type="UniPathway" id="UPA00186">
    <property type="reaction ID" value="UER00284"/>
</dbReference>
<dbReference type="Proteomes" id="UP000001747">
    <property type="component" value="Chromosome"/>
</dbReference>
<dbReference type="GO" id="GO:0005829">
    <property type="term" value="C:cytosol"/>
    <property type="evidence" value="ECO:0007669"/>
    <property type="project" value="TreeGrafter"/>
</dbReference>
<dbReference type="GO" id="GO:0008792">
    <property type="term" value="F:arginine decarboxylase activity"/>
    <property type="evidence" value="ECO:0007669"/>
    <property type="project" value="UniProtKB-UniRule"/>
</dbReference>
<dbReference type="GO" id="GO:0006527">
    <property type="term" value="P:arginine catabolic process"/>
    <property type="evidence" value="ECO:0007669"/>
    <property type="project" value="UniProtKB-UniRule"/>
</dbReference>
<dbReference type="GO" id="GO:0006596">
    <property type="term" value="P:polyamine biosynthetic process"/>
    <property type="evidence" value="ECO:0007669"/>
    <property type="project" value="UniProtKB-UniRule"/>
</dbReference>
<dbReference type="FunFam" id="3.60.90.10:FF:000005">
    <property type="entry name" value="Arginine decarboxylase proenzyme"/>
    <property type="match status" value="1"/>
</dbReference>
<dbReference type="Gene3D" id="3.60.90.10">
    <property type="entry name" value="S-adenosylmethionine decarboxylase"/>
    <property type="match status" value="1"/>
</dbReference>
<dbReference type="HAMAP" id="MF_00464">
    <property type="entry name" value="AdoMetDC_1"/>
    <property type="match status" value="1"/>
</dbReference>
<dbReference type="HAMAP" id="MF_01298">
    <property type="entry name" value="ArgDC"/>
    <property type="match status" value="1"/>
</dbReference>
<dbReference type="InterPro" id="IPR003826">
    <property type="entry name" value="AdoMetDC_fam_prok"/>
</dbReference>
<dbReference type="InterPro" id="IPR027549">
    <property type="entry name" value="ArgDC"/>
</dbReference>
<dbReference type="InterPro" id="IPR016067">
    <property type="entry name" value="S-AdoMet_deCO2ase_core"/>
</dbReference>
<dbReference type="InterPro" id="IPR017716">
    <property type="entry name" value="S-AdoMet_deCOase_pro-enz"/>
</dbReference>
<dbReference type="NCBIfam" id="TIGR03330">
    <property type="entry name" value="SAM_DCase_Bsu"/>
    <property type="match status" value="1"/>
</dbReference>
<dbReference type="PANTHER" id="PTHR33866">
    <property type="entry name" value="S-ADENOSYLMETHIONINE DECARBOXYLASE PROENZYME"/>
    <property type="match status" value="1"/>
</dbReference>
<dbReference type="PANTHER" id="PTHR33866:SF2">
    <property type="entry name" value="S-ADENOSYLMETHIONINE DECARBOXYLASE PROENZYME"/>
    <property type="match status" value="1"/>
</dbReference>
<dbReference type="Pfam" id="PF02675">
    <property type="entry name" value="AdoMet_dc"/>
    <property type="match status" value="1"/>
</dbReference>
<dbReference type="SUPFAM" id="SSF56276">
    <property type="entry name" value="S-adenosylmethionine decarboxylase"/>
    <property type="match status" value="1"/>
</dbReference>
<organism>
    <name type="scientific">Saccharolobus islandicus (strain L.S.2.15 / Lassen #1)</name>
    <name type="common">Sulfolobus islandicus</name>
    <dbReference type="NCBI Taxonomy" id="429572"/>
    <lineage>
        <taxon>Archaea</taxon>
        <taxon>Thermoproteota</taxon>
        <taxon>Thermoprotei</taxon>
        <taxon>Sulfolobales</taxon>
        <taxon>Sulfolobaceae</taxon>
        <taxon>Saccharolobus</taxon>
    </lineage>
</organism>
<gene>
    <name type="ordered locus">LS215_1696</name>
</gene>
<name>ARGDC_SACI2</name>
<protein>
    <recommendedName>
        <fullName evidence="1">Arginine decarboxylase proenzyme</fullName>
        <shortName evidence="1">ADC</shortName>
        <shortName evidence="1">ArgDC</shortName>
        <ecNumber evidence="1">4.1.1.19</ecNumber>
    </recommendedName>
    <alternativeName>
        <fullName evidence="1">Pyruvoyl-dependent arginine decarboxylase</fullName>
    </alternativeName>
    <component>
        <recommendedName>
            <fullName evidence="1">Arginine decarboxylase beta chain</fullName>
        </recommendedName>
    </component>
    <component>
        <recommendedName>
            <fullName evidence="1">Arginine decarboxylase alpha chain</fullName>
        </recommendedName>
    </component>
</protein>
<accession>C3MQN7</accession>
<feature type="chain" id="PRO_1000214229" description="Arginine decarboxylase beta chain" evidence="1">
    <location>
        <begin position="1"/>
        <end position="81"/>
    </location>
</feature>
<feature type="chain" id="PRO_1000214230" description="Arginine decarboxylase alpha chain" evidence="1">
    <location>
        <begin position="82"/>
        <end position="134"/>
    </location>
</feature>
<feature type="active site" description="Schiff-base intermediate with substrate; via pyruvic acid" evidence="1">
    <location>
        <position position="82"/>
    </location>
</feature>
<feature type="active site" description="Proton acceptor; for processing activity" evidence="1">
    <location>
        <position position="87"/>
    </location>
</feature>
<feature type="active site" description="Proton donor; for catalytic activity" evidence="1">
    <location>
        <position position="102"/>
    </location>
</feature>
<feature type="site" description="Cleavage (non-hydrolytic); by autolysis" evidence="1">
    <location>
        <begin position="81"/>
        <end position="82"/>
    </location>
</feature>
<feature type="modified residue" description="Pyruvic acid (Ser); by autocatalysis" evidence="1">
    <location>
        <position position="82"/>
    </location>
</feature>
<evidence type="ECO:0000255" key="1">
    <source>
        <dbReference type="HAMAP-Rule" id="MF_01298"/>
    </source>
</evidence>
<comment type="function">
    <text evidence="1">Specifically catalyzes the decarboxylation of L-arginine to agmatine. Has no S-adenosylmethionine decarboxylase (AdoMetDC) activity.</text>
</comment>
<comment type="catalytic activity">
    <reaction evidence="1">
        <text>L-arginine + H(+) = agmatine + CO2</text>
        <dbReference type="Rhea" id="RHEA:17641"/>
        <dbReference type="ChEBI" id="CHEBI:15378"/>
        <dbReference type="ChEBI" id="CHEBI:16526"/>
        <dbReference type="ChEBI" id="CHEBI:32682"/>
        <dbReference type="ChEBI" id="CHEBI:58145"/>
        <dbReference type="EC" id="4.1.1.19"/>
    </reaction>
</comment>
<comment type="cofactor">
    <cofactor evidence="1">
        <name>pyruvate</name>
        <dbReference type="ChEBI" id="CHEBI:15361"/>
    </cofactor>
    <text evidence="1">Binds 1 pyruvoyl group covalently per subunit.</text>
</comment>
<comment type="pathway">
    <text evidence="1">Amine and polyamine biosynthesis; agmatine biosynthesis; agmatine from L-arginine: step 1/1.</text>
</comment>
<comment type="subunit">
    <text evidence="1">Heterooctamer of four alpha and four beta chains arranged as a tetramer of alpha/beta heterodimers.</text>
</comment>
<comment type="PTM">
    <text evidence="1">Is synthesized initially as an inactive proenzyme. Formation of the active enzyme involves a self-maturation process in which the active site pyruvoyl group is generated from an internal serine residue via an autocatalytic post-translational modification. Two non-identical subunits are generated from the proenzyme in this reaction, and the pyruvate is formed at the N-terminus of the alpha chain, which is derived from the carboxyl end of the proenzyme. The post-translation cleavage follows an unusual pathway, termed non-hydrolytic serinolysis, in which the side chain hydroxyl group of the serine supplies its oxygen atom to form the C-terminus of the beta chain, while the remainder of the serine residue undergoes an oxidative deamination to produce ammonia and the pyruvoyl group blocking the N-terminus of the alpha chain.</text>
</comment>
<comment type="similarity">
    <text evidence="1">Belongs to the prokaryotic AdoMetDC family. Type 1 subfamily.</text>
</comment>
<keyword id="KW-0068">Autocatalytic cleavage</keyword>
<keyword id="KW-0210">Decarboxylase</keyword>
<keyword id="KW-0456">Lyase</keyword>
<keyword id="KW-0620">Polyamine biosynthesis</keyword>
<keyword id="KW-0670">Pyruvate</keyword>
<keyword id="KW-0704">Schiff base</keyword>
<keyword id="KW-0865">Zymogen</keyword>
<reference key="1">
    <citation type="journal article" date="2009" name="Proc. Natl. Acad. Sci. U.S.A.">
        <title>Biogeography of the Sulfolobus islandicus pan-genome.</title>
        <authorList>
            <person name="Reno M.L."/>
            <person name="Held N.L."/>
            <person name="Fields C.J."/>
            <person name="Burke P.V."/>
            <person name="Whitaker R.J."/>
        </authorList>
    </citation>
    <scope>NUCLEOTIDE SEQUENCE [LARGE SCALE GENOMIC DNA]</scope>
    <source>
        <strain>L.S.2.15 / Lassen #1</strain>
    </source>
</reference>